<proteinExistence type="evidence at protein level"/>
<organism>
    <name type="scientific">Homo sapiens</name>
    <name type="common">Human</name>
    <dbReference type="NCBI Taxonomy" id="9606"/>
    <lineage>
        <taxon>Eukaryota</taxon>
        <taxon>Metazoa</taxon>
        <taxon>Chordata</taxon>
        <taxon>Craniata</taxon>
        <taxon>Vertebrata</taxon>
        <taxon>Euteleostomi</taxon>
        <taxon>Mammalia</taxon>
        <taxon>Eutheria</taxon>
        <taxon>Euarchontoglires</taxon>
        <taxon>Primates</taxon>
        <taxon>Haplorrhini</taxon>
        <taxon>Catarrhini</taxon>
        <taxon>Hominidae</taxon>
        <taxon>Homo</taxon>
    </lineage>
</organism>
<evidence type="ECO:0000255" key="1"/>
<evidence type="ECO:0000255" key="2">
    <source>
        <dbReference type="PROSITE-ProRule" id="PRU00619"/>
    </source>
</evidence>
<evidence type="ECO:0000269" key="3">
    <source>
    </source>
</evidence>
<evidence type="ECO:0000269" key="4">
    <source>
    </source>
</evidence>
<evidence type="ECO:0000305" key="5"/>
<evidence type="ECO:0007744" key="6">
    <source>
    </source>
</evidence>
<evidence type="ECO:0007744" key="7">
    <source>
    </source>
</evidence>
<evidence type="ECO:0007744" key="8">
    <source>
    </source>
</evidence>
<evidence type="ECO:0007744" key="9">
    <source>
    </source>
</evidence>
<evidence type="ECO:0007744" key="10">
    <source>
    </source>
</evidence>
<dbReference type="EMBL" id="AB058695">
    <property type="protein sequence ID" value="BAB47421.1"/>
    <property type="status" value="ALT_INIT"/>
    <property type="molecule type" value="mRNA"/>
</dbReference>
<dbReference type="EMBL" id="AK023211">
    <property type="protein sequence ID" value="BAB14464.1"/>
    <property type="molecule type" value="mRNA"/>
</dbReference>
<dbReference type="EMBL" id="AK027215">
    <property type="protein sequence ID" value="BAB15696.1"/>
    <property type="status" value="ALT_FRAME"/>
    <property type="molecule type" value="mRNA"/>
</dbReference>
<dbReference type="EMBL" id="AL121891">
    <property type="status" value="NOT_ANNOTATED_CDS"/>
    <property type="molecule type" value="Genomic_DNA"/>
</dbReference>
<dbReference type="EMBL" id="BC011856">
    <property type="protein sequence ID" value="AAH11856.1"/>
    <property type="molecule type" value="mRNA"/>
</dbReference>
<dbReference type="EMBL" id="BC007413">
    <property type="protein sequence ID" value="AAH07413.1"/>
    <property type="molecule type" value="mRNA"/>
</dbReference>
<dbReference type="CCDS" id="CCDS13048.1"/>
<dbReference type="RefSeq" id="NP_068598.1">
    <property type="nucleotide sequence ID" value="NM_021826.5"/>
</dbReference>
<dbReference type="SMR" id="Q7L8L6"/>
<dbReference type="BioGRID" id="121924">
    <property type="interactions" value="334"/>
</dbReference>
<dbReference type="CORUM" id="Q7L8L6"/>
<dbReference type="FunCoup" id="Q7L8L6">
    <property type="interactions" value="1053"/>
</dbReference>
<dbReference type="IntAct" id="Q7L8L6">
    <property type="interactions" value="70"/>
</dbReference>
<dbReference type="MINT" id="Q7L8L6"/>
<dbReference type="STRING" id="9606.ENSP00000369618"/>
<dbReference type="GlyGen" id="Q7L8L6">
    <property type="glycosylation" value="2 sites, 1 O-linked glycan (1 site)"/>
</dbReference>
<dbReference type="iPTMnet" id="Q7L8L6"/>
<dbReference type="PhosphoSitePlus" id="Q7L8L6"/>
<dbReference type="SwissPalm" id="Q7L8L6"/>
<dbReference type="BioMuta" id="FASTKD5"/>
<dbReference type="DMDM" id="74749905"/>
<dbReference type="jPOST" id="Q7L8L6"/>
<dbReference type="MassIVE" id="Q7L8L6"/>
<dbReference type="PaxDb" id="9606-ENSP00000369618"/>
<dbReference type="PeptideAtlas" id="Q7L8L6"/>
<dbReference type="ProteomicsDB" id="68838"/>
<dbReference type="Pumba" id="Q7L8L6"/>
<dbReference type="Antibodypedia" id="23456">
    <property type="antibodies" value="90 antibodies from 19 providers"/>
</dbReference>
<dbReference type="DNASU" id="60493"/>
<dbReference type="Ensembl" id="ENST00000380266.4">
    <property type="protein sequence ID" value="ENSP00000369618.3"/>
    <property type="gene ID" value="ENSG00000215251.5"/>
</dbReference>
<dbReference type="Ensembl" id="ENST00000687419.1">
    <property type="protein sequence ID" value="ENSP00000510780.1"/>
    <property type="gene ID" value="ENSG00000215251.5"/>
</dbReference>
<dbReference type="Ensembl" id="ENST00000688674.1">
    <property type="protein sequence ID" value="ENSP00000510078.1"/>
    <property type="gene ID" value="ENSG00000215251.5"/>
</dbReference>
<dbReference type="Ensembl" id="ENST00000692371.1">
    <property type="protein sequence ID" value="ENSP00000510038.1"/>
    <property type="gene ID" value="ENSG00000215251.5"/>
</dbReference>
<dbReference type="GeneID" id="60493"/>
<dbReference type="KEGG" id="hsa:60493"/>
<dbReference type="MANE-Select" id="ENST00000380266.4">
    <property type="protein sequence ID" value="ENSP00000369618.3"/>
    <property type="RefSeq nucleotide sequence ID" value="NM_021826.5"/>
    <property type="RefSeq protein sequence ID" value="NP_068598.1"/>
</dbReference>
<dbReference type="UCSC" id="uc002whz.5">
    <property type="organism name" value="human"/>
</dbReference>
<dbReference type="AGR" id="HGNC:25790"/>
<dbReference type="CTD" id="60493"/>
<dbReference type="DisGeNET" id="60493"/>
<dbReference type="GeneCards" id="FASTKD5"/>
<dbReference type="HGNC" id="HGNC:25790">
    <property type="gene designation" value="FASTKD5"/>
</dbReference>
<dbReference type="HPA" id="ENSG00000215251">
    <property type="expression patterns" value="Low tissue specificity"/>
</dbReference>
<dbReference type="neXtProt" id="NX_Q7L8L6"/>
<dbReference type="OpenTargets" id="ENSG00000215251"/>
<dbReference type="PharmGKB" id="PA145148886"/>
<dbReference type="VEuPathDB" id="HostDB:ENSG00000215251"/>
<dbReference type="eggNOG" id="ENOG502QRPY">
    <property type="taxonomic scope" value="Eukaryota"/>
</dbReference>
<dbReference type="GeneTree" id="ENSGT01030000234607"/>
<dbReference type="HOGENOM" id="CLU_021040_0_0_1"/>
<dbReference type="InParanoid" id="Q7L8L6"/>
<dbReference type="OMA" id="PHTRSID"/>
<dbReference type="OrthoDB" id="10064757at2759"/>
<dbReference type="PAN-GO" id="Q7L8L6">
    <property type="GO annotations" value="5 GO annotations based on evolutionary models"/>
</dbReference>
<dbReference type="PhylomeDB" id="Q7L8L6"/>
<dbReference type="TreeFam" id="TF352874"/>
<dbReference type="PathwayCommons" id="Q7L8L6"/>
<dbReference type="Reactome" id="R-HSA-9837092">
    <property type="pathway name" value="FASTK family proteins regulate processing and stability of mitochondrial RNAs"/>
</dbReference>
<dbReference type="SignaLink" id="Q7L8L6"/>
<dbReference type="SIGNOR" id="Q7L8L6"/>
<dbReference type="BioGRID-ORCS" id="60493">
    <property type="hits" value="224 hits in 1167 CRISPR screens"/>
</dbReference>
<dbReference type="CD-CODE" id="5965E019">
    <property type="entry name" value="mtRNA granule"/>
</dbReference>
<dbReference type="GenomeRNAi" id="60493"/>
<dbReference type="Pharos" id="Q7L8L6">
    <property type="development level" value="Tdark"/>
</dbReference>
<dbReference type="PRO" id="PR:Q7L8L6"/>
<dbReference type="Proteomes" id="UP000005640">
    <property type="component" value="Chromosome 20"/>
</dbReference>
<dbReference type="RNAct" id="Q7L8L6">
    <property type="molecule type" value="protein"/>
</dbReference>
<dbReference type="Bgee" id="ENSG00000215251">
    <property type="expression patterns" value="Expressed in gastrocnemius and 196 other cell types or tissues"/>
</dbReference>
<dbReference type="GO" id="GO:0005759">
    <property type="term" value="C:mitochondrial matrix"/>
    <property type="evidence" value="ECO:0000318"/>
    <property type="project" value="GO_Central"/>
</dbReference>
<dbReference type="GO" id="GO:0042645">
    <property type="term" value="C:mitochondrial nucleoid"/>
    <property type="evidence" value="ECO:0000314"/>
    <property type="project" value="UniProtKB"/>
</dbReference>
<dbReference type="GO" id="GO:0005739">
    <property type="term" value="C:mitochondrion"/>
    <property type="evidence" value="ECO:0000314"/>
    <property type="project" value="UniProtKB"/>
</dbReference>
<dbReference type="GO" id="GO:0035770">
    <property type="term" value="C:ribonucleoprotein granule"/>
    <property type="evidence" value="ECO:0000314"/>
    <property type="project" value="UniProtKB"/>
</dbReference>
<dbReference type="GO" id="GO:0003723">
    <property type="term" value="F:RNA binding"/>
    <property type="evidence" value="ECO:0007005"/>
    <property type="project" value="UniProtKB"/>
</dbReference>
<dbReference type="GO" id="GO:0019843">
    <property type="term" value="F:rRNA binding"/>
    <property type="evidence" value="ECO:0000314"/>
    <property type="project" value="UniProtKB"/>
</dbReference>
<dbReference type="GO" id="GO:0000963">
    <property type="term" value="P:mitochondrial RNA processing"/>
    <property type="evidence" value="ECO:0000315"/>
    <property type="project" value="UniProtKB"/>
</dbReference>
<dbReference type="GO" id="GO:0006397">
    <property type="term" value="P:mRNA processing"/>
    <property type="evidence" value="ECO:0007669"/>
    <property type="project" value="UniProtKB-KW"/>
</dbReference>
<dbReference type="GO" id="GO:0044528">
    <property type="term" value="P:regulation of mitochondrial mRNA stability"/>
    <property type="evidence" value="ECO:0000318"/>
    <property type="project" value="GO_Central"/>
</dbReference>
<dbReference type="InterPro" id="IPR013579">
    <property type="entry name" value="FAST_2"/>
</dbReference>
<dbReference type="InterPro" id="IPR050870">
    <property type="entry name" value="FAST_kinase"/>
</dbReference>
<dbReference type="InterPro" id="IPR010622">
    <property type="entry name" value="FAST_Leu-rich"/>
</dbReference>
<dbReference type="InterPro" id="IPR013584">
    <property type="entry name" value="RAP"/>
</dbReference>
<dbReference type="PANTHER" id="PTHR21228:SF70">
    <property type="entry name" value="FAST KINASE DOMAIN-CONTAINING PROTEIN 5, MITOCHONDRIAL"/>
    <property type="match status" value="1"/>
</dbReference>
<dbReference type="PANTHER" id="PTHR21228">
    <property type="entry name" value="FAST LEU-RICH DOMAIN-CONTAINING"/>
    <property type="match status" value="1"/>
</dbReference>
<dbReference type="Pfam" id="PF06743">
    <property type="entry name" value="FAST_1"/>
    <property type="match status" value="1"/>
</dbReference>
<dbReference type="Pfam" id="PF08368">
    <property type="entry name" value="FAST_2"/>
    <property type="match status" value="1"/>
</dbReference>
<dbReference type="Pfam" id="PF08373">
    <property type="entry name" value="RAP"/>
    <property type="match status" value="1"/>
</dbReference>
<dbReference type="SMART" id="SM00952">
    <property type="entry name" value="RAP"/>
    <property type="match status" value="1"/>
</dbReference>
<dbReference type="PROSITE" id="PS51286">
    <property type="entry name" value="RAP"/>
    <property type="match status" value="1"/>
</dbReference>
<keyword id="KW-0007">Acetylation</keyword>
<keyword id="KW-0496">Mitochondrion</keyword>
<keyword id="KW-1135">Mitochondrion nucleoid</keyword>
<keyword id="KW-0507">mRNA processing</keyword>
<keyword id="KW-0597">Phosphoprotein</keyword>
<keyword id="KW-1267">Proteomics identification</keyword>
<keyword id="KW-1185">Reference proteome</keyword>
<keyword id="KW-0694">RNA-binding</keyword>
<keyword id="KW-0699">rRNA-binding</keyword>
<keyword id="KW-0809">Transit peptide</keyword>
<sequence>MAATLKSLKLVRYRAFCSPSAFGAVRSVSYWNVSSTQHGGQDPPEHISLCHSAKKVKNICSTFSSRRILTTSSAHPGLEFSKTSSSKASTLQLGSPRATGVDEEDVEVFDSFENMRVFLQLRPEYRVHSYNASETSQLLSVSEGELILHKVRVNQNNLQAQVIVDYLCKLSSLPAEQHPVLLGSTSFALLCQLSVKKIQLFDTQDLINVLKAFVILGIPHSHSMLDVYETKCCHQVWEMNMDQLLLVADLWRYLGRKVPRFLNIFSSYLNLHWKDLSLSQLVHLIYVIGENRQVSQDLMQKLESLILKYIDLINLEEVGTICLGFFKSSTNLSEFVMRKIGDLACANIQHLSSRSLVNIVKMFRFTHVDHINFMKQIGEIAPQRIPSLGVQGVMHLTLYCSALRFLNEGVMNAVAASLPPRVAHCRSKDVAKILWSFGTLNYKPPNAEEFYSSLISEIHRKMPEFNQYPEHLPTCLLGLAFLEYFPVELIDFALSPGFVRLAQERTKFDLLKELYTLDGTVGIECPDYRGNRLSTHLQQEGSELLWYLAEKDMNSKPEFLETVFLLETMLGGPQYVKHHMILPHTRSSDLEVQLDVNLKPLPFNREATPAENVAKLRLEHVGVSLTDDLMNKLLKGKARGHFQGKTESEPGQQPMELENKAAVPLGGFLCNVADKSGAMEMAGLCPAACMQTPRMKLAVQFTNRNQYCYGSRDLLGLHNMKRRQLARLGYRVVELSYWEWLPLLKRTRLEKLAFLHEKVFTSAL</sequence>
<protein>
    <recommendedName>
        <fullName>FAST kinase domain-containing protein 5, mitochondrial</fullName>
    </recommendedName>
</protein>
<gene>
    <name type="primary">FASTKD5</name>
    <name type="synonym">KIAA1792</name>
</gene>
<name>FAKD5_HUMAN</name>
<comment type="function">
    <text evidence="4">Plays an important role in the processing of non-canonical mitochondrial mRNA precursors (PubMed:25683715).</text>
</comment>
<comment type="subunit">
    <text evidence="4">Found in a complex with GRSF1, DDX28, DHX30 and FASTKD2. Associates with the 12S mitochondrial rRNA (12S mt-rRNA).</text>
</comment>
<comment type="interaction">
    <interactant intactId="EBI-747570">
        <id>Q7L8L6</id>
    </interactant>
    <interactant intactId="EBI-2909270">
        <id>O95259</id>
        <label>KCNH1</label>
    </interactant>
    <organismsDiffer>false</organismsDiffer>
    <experiments>3</experiments>
</comment>
<comment type="interaction">
    <interactant intactId="EBI-747570">
        <id>Q7L8L6</id>
    </interactant>
    <interactant intactId="EBI-10172526">
        <id>Q9UJV3-2</id>
        <label>MID2</label>
    </interactant>
    <organismsDiffer>false</organismsDiffer>
    <experiments>3</experiments>
</comment>
<comment type="interaction">
    <interactant intactId="EBI-747570">
        <id>Q7L8L6</id>
    </interactant>
    <interactant intactId="EBI-357345">
        <id>Q14160</id>
        <label>SCRIB</label>
    </interactant>
    <organismsDiffer>false</organismsDiffer>
    <experiments>2</experiments>
</comment>
<comment type="interaction">
    <interactant intactId="EBI-747570">
        <id>Q7L8L6</id>
    </interactant>
    <interactant intactId="EBI-719493">
        <id>P14373</id>
        <label>TRIM27</label>
    </interactant>
    <organismsDiffer>false</organismsDiffer>
    <experiments>3</experiments>
</comment>
<comment type="interaction">
    <interactant intactId="EBI-747570">
        <id>Q7L8L6</id>
    </interactant>
    <interactant intactId="EBI-473850">
        <id>P61086</id>
        <label>UBE2K</label>
    </interactant>
    <organismsDiffer>false</organismsDiffer>
    <experiments>3</experiments>
</comment>
<comment type="subcellular location">
    <subcellularLocation>
        <location evidence="3 4">Mitochondrion matrix</location>
        <location evidence="3 4">Mitochondrion nucleoid</location>
    </subcellularLocation>
    <text evidence="4">Localizes to mitochondrial RNA granules found in close proximity to the mitochondrial nucleoids.</text>
</comment>
<comment type="tissue specificity">
    <text evidence="3">Expression detected in spleen, thymus, testis, ovary, colon, heart, smooth muscle, kidney, brain, lung, liver and white adipose tissue with highest expression in heart, smooth muscle, liver and thyroid.</text>
</comment>
<comment type="similarity">
    <text evidence="5">Belongs to the FAST kinase family.</text>
</comment>
<comment type="sequence caution" evidence="5">
    <conflict type="frameshift">
        <sequence resource="EMBL-CDS" id="BAB15696"/>
    </conflict>
</comment>
<comment type="sequence caution" evidence="5">
    <conflict type="erroneous initiation">
        <sequence resource="EMBL-CDS" id="BAB47421"/>
    </conflict>
    <text>Extended N-terminus.</text>
</comment>
<reference key="1">
    <citation type="journal article" date="2001" name="DNA Res.">
        <title>Prediction of the coding sequences of unidentified human genes. XX. The complete sequences of 100 new cDNA clones from brain which code for large proteins in vitro.</title>
        <authorList>
            <person name="Nagase T."/>
            <person name="Nakayama M."/>
            <person name="Nakajima D."/>
            <person name="Kikuno R."/>
            <person name="Ohara O."/>
        </authorList>
    </citation>
    <scope>NUCLEOTIDE SEQUENCE [LARGE SCALE MRNA]</scope>
    <source>
        <tissue>Brain</tissue>
    </source>
</reference>
<reference key="2">
    <citation type="journal article" date="2004" name="Nat. Genet.">
        <title>Complete sequencing and characterization of 21,243 full-length human cDNAs.</title>
        <authorList>
            <person name="Ota T."/>
            <person name="Suzuki Y."/>
            <person name="Nishikawa T."/>
            <person name="Otsuki T."/>
            <person name="Sugiyama T."/>
            <person name="Irie R."/>
            <person name="Wakamatsu A."/>
            <person name="Hayashi K."/>
            <person name="Sato H."/>
            <person name="Nagai K."/>
            <person name="Kimura K."/>
            <person name="Makita H."/>
            <person name="Sekine M."/>
            <person name="Obayashi M."/>
            <person name="Nishi T."/>
            <person name="Shibahara T."/>
            <person name="Tanaka T."/>
            <person name="Ishii S."/>
            <person name="Yamamoto J."/>
            <person name="Saito K."/>
            <person name="Kawai Y."/>
            <person name="Isono Y."/>
            <person name="Nakamura Y."/>
            <person name="Nagahari K."/>
            <person name="Murakami K."/>
            <person name="Yasuda T."/>
            <person name="Iwayanagi T."/>
            <person name="Wagatsuma M."/>
            <person name="Shiratori A."/>
            <person name="Sudo H."/>
            <person name="Hosoiri T."/>
            <person name="Kaku Y."/>
            <person name="Kodaira H."/>
            <person name="Kondo H."/>
            <person name="Sugawara M."/>
            <person name="Takahashi M."/>
            <person name="Kanda K."/>
            <person name="Yokoi T."/>
            <person name="Furuya T."/>
            <person name="Kikkawa E."/>
            <person name="Omura Y."/>
            <person name="Abe K."/>
            <person name="Kamihara K."/>
            <person name="Katsuta N."/>
            <person name="Sato K."/>
            <person name="Tanikawa M."/>
            <person name="Yamazaki M."/>
            <person name="Ninomiya K."/>
            <person name="Ishibashi T."/>
            <person name="Yamashita H."/>
            <person name="Murakawa K."/>
            <person name="Fujimori K."/>
            <person name="Tanai H."/>
            <person name="Kimata M."/>
            <person name="Watanabe M."/>
            <person name="Hiraoka S."/>
            <person name="Chiba Y."/>
            <person name="Ishida S."/>
            <person name="Ono Y."/>
            <person name="Takiguchi S."/>
            <person name="Watanabe S."/>
            <person name="Yosida M."/>
            <person name="Hotuta T."/>
            <person name="Kusano J."/>
            <person name="Kanehori K."/>
            <person name="Takahashi-Fujii A."/>
            <person name="Hara H."/>
            <person name="Tanase T.-O."/>
            <person name="Nomura Y."/>
            <person name="Togiya S."/>
            <person name="Komai F."/>
            <person name="Hara R."/>
            <person name="Takeuchi K."/>
            <person name="Arita M."/>
            <person name="Imose N."/>
            <person name="Musashino K."/>
            <person name="Yuuki H."/>
            <person name="Oshima A."/>
            <person name="Sasaki N."/>
            <person name="Aotsuka S."/>
            <person name="Yoshikawa Y."/>
            <person name="Matsunawa H."/>
            <person name="Ichihara T."/>
            <person name="Shiohata N."/>
            <person name="Sano S."/>
            <person name="Moriya S."/>
            <person name="Momiyama H."/>
            <person name="Satoh N."/>
            <person name="Takami S."/>
            <person name="Terashima Y."/>
            <person name="Suzuki O."/>
            <person name="Nakagawa S."/>
            <person name="Senoh A."/>
            <person name="Mizoguchi H."/>
            <person name="Goto Y."/>
            <person name="Shimizu F."/>
            <person name="Wakebe H."/>
            <person name="Hishigaki H."/>
            <person name="Watanabe T."/>
            <person name="Sugiyama A."/>
            <person name="Takemoto M."/>
            <person name="Kawakami B."/>
            <person name="Yamazaki M."/>
            <person name="Watanabe K."/>
            <person name="Kumagai A."/>
            <person name="Itakura S."/>
            <person name="Fukuzumi Y."/>
            <person name="Fujimori Y."/>
            <person name="Komiyama M."/>
            <person name="Tashiro H."/>
            <person name="Tanigami A."/>
            <person name="Fujiwara T."/>
            <person name="Ono T."/>
            <person name="Yamada K."/>
            <person name="Fujii Y."/>
            <person name="Ozaki K."/>
            <person name="Hirao M."/>
            <person name="Ohmori Y."/>
            <person name="Kawabata A."/>
            <person name="Hikiji T."/>
            <person name="Kobatake N."/>
            <person name="Inagaki H."/>
            <person name="Ikema Y."/>
            <person name="Okamoto S."/>
            <person name="Okitani R."/>
            <person name="Kawakami T."/>
            <person name="Noguchi S."/>
            <person name="Itoh T."/>
            <person name="Shigeta K."/>
            <person name="Senba T."/>
            <person name="Matsumura K."/>
            <person name="Nakajima Y."/>
            <person name="Mizuno T."/>
            <person name="Morinaga M."/>
            <person name="Sasaki M."/>
            <person name="Togashi T."/>
            <person name="Oyama M."/>
            <person name="Hata H."/>
            <person name="Watanabe M."/>
            <person name="Komatsu T."/>
            <person name="Mizushima-Sugano J."/>
            <person name="Satoh T."/>
            <person name="Shirai Y."/>
            <person name="Takahashi Y."/>
            <person name="Nakagawa K."/>
            <person name="Okumura K."/>
            <person name="Nagase T."/>
            <person name="Nomura N."/>
            <person name="Kikuchi H."/>
            <person name="Masuho Y."/>
            <person name="Yamashita R."/>
            <person name="Nakai K."/>
            <person name="Yada T."/>
            <person name="Nakamura Y."/>
            <person name="Ohara O."/>
            <person name="Isogai T."/>
            <person name="Sugano S."/>
        </authorList>
    </citation>
    <scope>NUCLEOTIDE SEQUENCE [LARGE SCALE MRNA]</scope>
    <source>
        <tissue>Lung</tissue>
    </source>
</reference>
<reference key="3">
    <citation type="journal article" date="2001" name="Nature">
        <title>The DNA sequence and comparative analysis of human chromosome 20.</title>
        <authorList>
            <person name="Deloukas P."/>
            <person name="Matthews L.H."/>
            <person name="Ashurst J.L."/>
            <person name="Burton J."/>
            <person name="Gilbert J.G.R."/>
            <person name="Jones M."/>
            <person name="Stavrides G."/>
            <person name="Almeida J.P."/>
            <person name="Babbage A.K."/>
            <person name="Bagguley C.L."/>
            <person name="Bailey J."/>
            <person name="Barlow K.F."/>
            <person name="Bates K.N."/>
            <person name="Beard L.M."/>
            <person name="Beare D.M."/>
            <person name="Beasley O.P."/>
            <person name="Bird C.P."/>
            <person name="Blakey S.E."/>
            <person name="Bridgeman A.M."/>
            <person name="Brown A.J."/>
            <person name="Buck D."/>
            <person name="Burrill W.D."/>
            <person name="Butler A.P."/>
            <person name="Carder C."/>
            <person name="Carter N.P."/>
            <person name="Chapman J.C."/>
            <person name="Clamp M."/>
            <person name="Clark G."/>
            <person name="Clark L.N."/>
            <person name="Clark S.Y."/>
            <person name="Clee C.M."/>
            <person name="Clegg S."/>
            <person name="Cobley V.E."/>
            <person name="Collier R.E."/>
            <person name="Connor R.E."/>
            <person name="Corby N.R."/>
            <person name="Coulson A."/>
            <person name="Coville G.J."/>
            <person name="Deadman R."/>
            <person name="Dhami P.D."/>
            <person name="Dunn M."/>
            <person name="Ellington A.G."/>
            <person name="Frankland J.A."/>
            <person name="Fraser A."/>
            <person name="French L."/>
            <person name="Garner P."/>
            <person name="Grafham D.V."/>
            <person name="Griffiths C."/>
            <person name="Griffiths M.N.D."/>
            <person name="Gwilliam R."/>
            <person name="Hall R.E."/>
            <person name="Hammond S."/>
            <person name="Harley J.L."/>
            <person name="Heath P.D."/>
            <person name="Ho S."/>
            <person name="Holden J.L."/>
            <person name="Howden P.J."/>
            <person name="Huckle E."/>
            <person name="Hunt A.R."/>
            <person name="Hunt S.E."/>
            <person name="Jekosch K."/>
            <person name="Johnson C.M."/>
            <person name="Johnson D."/>
            <person name="Kay M.P."/>
            <person name="Kimberley A.M."/>
            <person name="King A."/>
            <person name="Knights A."/>
            <person name="Laird G.K."/>
            <person name="Lawlor S."/>
            <person name="Lehvaeslaiho M.H."/>
            <person name="Leversha M.A."/>
            <person name="Lloyd C."/>
            <person name="Lloyd D.M."/>
            <person name="Lovell J.D."/>
            <person name="Marsh V.L."/>
            <person name="Martin S.L."/>
            <person name="McConnachie L.J."/>
            <person name="McLay K."/>
            <person name="McMurray A.A."/>
            <person name="Milne S.A."/>
            <person name="Mistry D."/>
            <person name="Moore M.J.F."/>
            <person name="Mullikin J.C."/>
            <person name="Nickerson T."/>
            <person name="Oliver K."/>
            <person name="Parker A."/>
            <person name="Patel R."/>
            <person name="Pearce T.A.V."/>
            <person name="Peck A.I."/>
            <person name="Phillimore B.J.C.T."/>
            <person name="Prathalingam S.R."/>
            <person name="Plumb R.W."/>
            <person name="Ramsay H."/>
            <person name="Rice C.M."/>
            <person name="Ross M.T."/>
            <person name="Scott C.E."/>
            <person name="Sehra H.K."/>
            <person name="Shownkeen R."/>
            <person name="Sims S."/>
            <person name="Skuce C.D."/>
            <person name="Smith M.L."/>
            <person name="Soderlund C."/>
            <person name="Steward C.A."/>
            <person name="Sulston J.E."/>
            <person name="Swann R.M."/>
            <person name="Sycamore N."/>
            <person name="Taylor R."/>
            <person name="Tee L."/>
            <person name="Thomas D.W."/>
            <person name="Thorpe A."/>
            <person name="Tracey A."/>
            <person name="Tromans A.C."/>
            <person name="Vaudin M."/>
            <person name="Wall M."/>
            <person name="Wallis J.M."/>
            <person name="Whitehead S.L."/>
            <person name="Whittaker P."/>
            <person name="Willey D.L."/>
            <person name="Williams L."/>
            <person name="Williams S.A."/>
            <person name="Wilming L."/>
            <person name="Wray P.W."/>
            <person name="Hubbard T."/>
            <person name="Durbin R.M."/>
            <person name="Bentley D.R."/>
            <person name="Beck S."/>
            <person name="Rogers J."/>
        </authorList>
    </citation>
    <scope>NUCLEOTIDE SEQUENCE [LARGE SCALE GENOMIC DNA]</scope>
</reference>
<reference key="4">
    <citation type="journal article" date="2004" name="Genome Res.">
        <title>The status, quality, and expansion of the NIH full-length cDNA project: the Mammalian Gene Collection (MGC).</title>
        <authorList>
            <consortium name="The MGC Project Team"/>
        </authorList>
    </citation>
    <scope>NUCLEOTIDE SEQUENCE [LARGE SCALE MRNA]</scope>
    <source>
        <tissue>Muscle</tissue>
        <tissue>Skin</tissue>
    </source>
</reference>
<reference key="5">
    <citation type="journal article" date="2006" name="Nat. Biotechnol.">
        <title>A probability-based approach for high-throughput protein phosphorylation analysis and site localization.</title>
        <authorList>
            <person name="Beausoleil S.A."/>
            <person name="Villen J."/>
            <person name="Gerber S.A."/>
            <person name="Rush J."/>
            <person name="Gygi S.P."/>
        </authorList>
    </citation>
    <scope>PHOSPHORYLATION [LARGE SCALE ANALYSIS] AT SER-95</scope>
    <scope>IDENTIFICATION BY MASS SPECTROMETRY [LARGE SCALE ANALYSIS]</scope>
    <source>
        <tissue>Cervix carcinoma</tissue>
    </source>
</reference>
<reference key="6">
    <citation type="journal article" date="2008" name="Mol. Cell">
        <title>Kinase-selective enrichment enables quantitative phosphoproteomics of the kinome across the cell cycle.</title>
        <authorList>
            <person name="Daub H."/>
            <person name="Olsen J.V."/>
            <person name="Bairlein M."/>
            <person name="Gnad F."/>
            <person name="Oppermann F.S."/>
            <person name="Korner R."/>
            <person name="Greff Z."/>
            <person name="Keri G."/>
            <person name="Stemmann O."/>
            <person name="Mann M."/>
        </authorList>
    </citation>
    <scope>PHOSPHORYLATION [LARGE SCALE ANALYSIS] AT SER-95</scope>
    <scope>IDENTIFICATION BY MASS SPECTROMETRY [LARGE SCALE ANALYSIS]</scope>
    <source>
        <tissue>Cervix carcinoma</tissue>
    </source>
</reference>
<reference key="7">
    <citation type="journal article" date="2008" name="Proc. Natl. Acad. Sci. U.S.A.">
        <title>A quantitative atlas of mitotic phosphorylation.</title>
        <authorList>
            <person name="Dephoure N."/>
            <person name="Zhou C."/>
            <person name="Villen J."/>
            <person name="Beausoleil S.A."/>
            <person name="Bakalarski C.E."/>
            <person name="Elledge S.J."/>
            <person name="Gygi S.P."/>
        </authorList>
    </citation>
    <scope>PHOSPHORYLATION [LARGE SCALE ANALYSIS] AT SER-95</scope>
    <scope>IDENTIFICATION BY MASS SPECTROMETRY [LARGE SCALE ANALYSIS]</scope>
    <source>
        <tissue>Cervix carcinoma</tissue>
    </source>
</reference>
<reference key="8">
    <citation type="journal article" date="2009" name="Science">
        <title>Lysine acetylation targets protein complexes and co-regulates major cellular functions.</title>
        <authorList>
            <person name="Choudhary C."/>
            <person name="Kumar C."/>
            <person name="Gnad F."/>
            <person name="Nielsen M.L."/>
            <person name="Rehman M."/>
            <person name="Walther T.C."/>
            <person name="Olsen J.V."/>
            <person name="Mann M."/>
        </authorList>
    </citation>
    <scope>ACETYLATION [LARGE SCALE ANALYSIS] AT LYS-507</scope>
    <scope>IDENTIFICATION BY MASS SPECTROMETRY [LARGE SCALE ANALYSIS]</scope>
</reference>
<reference key="9">
    <citation type="journal article" date="2010" name="Biochem. Biophys. Res. Commun.">
        <title>Fast kinase domain-containing protein 3 is a mitochondrial protein essential for cellular respiration.</title>
        <authorList>
            <person name="Simarro M."/>
            <person name="Gimenez-Cassina A."/>
            <person name="Kedersha N."/>
            <person name="Lazaro J.B."/>
            <person name="Adelmant G.O."/>
            <person name="Marto J.A."/>
            <person name="Rhee K."/>
            <person name="Tisdale S."/>
            <person name="Danial N."/>
            <person name="Benarafa C."/>
            <person name="Orduna A."/>
            <person name="Anderson P."/>
        </authorList>
    </citation>
    <scope>SUBCELLULAR LOCATION</scope>
    <scope>TISSUE SPECIFICITY</scope>
</reference>
<reference key="10">
    <citation type="journal article" date="2011" name="BMC Syst. Biol.">
        <title>Initial characterization of the human central proteome.</title>
        <authorList>
            <person name="Burkard T.R."/>
            <person name="Planyavsky M."/>
            <person name="Kaupe I."/>
            <person name="Breitwieser F.P."/>
            <person name="Buerckstuemmer T."/>
            <person name="Bennett K.L."/>
            <person name="Superti-Furga G."/>
            <person name="Colinge J."/>
        </authorList>
    </citation>
    <scope>IDENTIFICATION BY MASS SPECTROMETRY [LARGE SCALE ANALYSIS]</scope>
</reference>
<reference key="11">
    <citation type="journal article" date="2013" name="J. Proteome Res.">
        <title>Toward a comprehensive characterization of a human cancer cell phosphoproteome.</title>
        <authorList>
            <person name="Zhou H."/>
            <person name="Di Palma S."/>
            <person name="Preisinger C."/>
            <person name="Peng M."/>
            <person name="Polat A.N."/>
            <person name="Heck A.J."/>
            <person name="Mohammed S."/>
        </authorList>
    </citation>
    <scope>PHOSPHORYLATION [LARGE SCALE ANALYSIS] AT SER-95</scope>
    <scope>IDENTIFICATION BY MASS SPECTROMETRY [LARGE SCALE ANALYSIS]</scope>
    <source>
        <tissue>Cervix carcinoma</tissue>
        <tissue>Erythroleukemia</tissue>
    </source>
</reference>
<reference key="12">
    <citation type="journal article" date="2015" name="Cell Rep.">
        <title>Mitochondrial RNA granules are centers for post-transcriptional RNA processing and ribosome biogenesis.</title>
        <authorList>
            <person name="Antonicka H."/>
            <person name="Shoubridge E.A."/>
        </authorList>
    </citation>
    <scope>FUNCTION</scope>
    <scope>IDENTIFICATION IN A COMPLEX WITH GRSF1; DDX28; DHX30 AND FASTKD2</scope>
    <scope>SUBCELLULAR LOCATION</scope>
    <scope>RNA-BINDING</scope>
    <scope>IDENTIFICATION BY MASS SPECTROMETRY</scope>
</reference>
<reference key="13">
    <citation type="journal article" date="2015" name="Proteomics">
        <title>N-terminome analysis of the human mitochondrial proteome.</title>
        <authorList>
            <person name="Vaca Jacome A.S."/>
            <person name="Rabilloud T."/>
            <person name="Schaeffer-Reiss C."/>
            <person name="Rompais M."/>
            <person name="Ayoub D."/>
            <person name="Lane L."/>
            <person name="Bairoch A."/>
            <person name="Van Dorsselaer A."/>
            <person name="Carapito C."/>
        </authorList>
    </citation>
    <scope>IDENTIFICATION BY MASS SPECTROMETRY [LARGE SCALE ANALYSIS]</scope>
</reference>
<feature type="transit peptide" description="Mitochondrion" evidence="1">
    <location>
        <begin position="1"/>
        <end position="27"/>
    </location>
</feature>
<feature type="chain" id="PRO_0000284979" description="FAST kinase domain-containing protein 5, mitochondrial">
    <location>
        <begin position="28"/>
        <end position="764"/>
    </location>
</feature>
<feature type="domain" description="RAP" evidence="2">
    <location>
        <begin position="697"/>
        <end position="757"/>
    </location>
</feature>
<feature type="modified residue" description="Phosphoserine" evidence="6 7 8 10">
    <location>
        <position position="95"/>
    </location>
</feature>
<feature type="modified residue" description="N6-acetyllysine" evidence="9">
    <location>
        <position position="507"/>
    </location>
</feature>
<feature type="sequence variant" id="VAR_053891" description="In dbSNP:rs3746700.">
    <original>R</original>
    <variation>C</variation>
    <location>
        <position position="256"/>
    </location>
</feature>
<feature type="sequence variant" id="VAR_053892" description="In dbSNP:rs2422857.">
    <original>I</original>
    <variation>T</variation>
    <location>
        <position position="288"/>
    </location>
</feature>
<feature type="sequence variant" id="VAR_053893" description="In dbSNP:rs3746699.">
    <original>I</original>
    <variation>V</variation>
    <location>
        <position position="377"/>
    </location>
</feature>
<accession>Q7L8L6</accession>
<accession>Q96JN3</accession>
<accession>Q9H5D1</accession>
<accession>Q9H8Y3</accession>